<organism>
    <name type="scientific">Brucella suis biovar 1 (strain 1330)</name>
    <dbReference type="NCBI Taxonomy" id="204722"/>
    <lineage>
        <taxon>Bacteria</taxon>
        <taxon>Pseudomonadati</taxon>
        <taxon>Pseudomonadota</taxon>
        <taxon>Alphaproteobacteria</taxon>
        <taxon>Hyphomicrobiales</taxon>
        <taxon>Brucellaceae</taxon>
        <taxon>Brucella/Ochrobactrum group</taxon>
        <taxon>Brucella</taxon>
    </lineage>
</organism>
<reference key="1">
    <citation type="journal article" date="2002" name="Proc. Natl. Acad. Sci. U.S.A.">
        <title>The Brucella suis genome reveals fundamental similarities between animal and plant pathogens and symbionts.</title>
        <authorList>
            <person name="Paulsen I.T."/>
            <person name="Seshadri R."/>
            <person name="Nelson K.E."/>
            <person name="Eisen J.A."/>
            <person name="Heidelberg J.F."/>
            <person name="Read T.D."/>
            <person name="Dodson R.J."/>
            <person name="Umayam L.A."/>
            <person name="Brinkac L.M."/>
            <person name="Beanan M.J."/>
            <person name="Daugherty S.C."/>
            <person name="DeBoy R.T."/>
            <person name="Durkin A.S."/>
            <person name="Kolonay J.F."/>
            <person name="Madupu R."/>
            <person name="Nelson W.C."/>
            <person name="Ayodeji B."/>
            <person name="Kraul M."/>
            <person name="Shetty J."/>
            <person name="Malek J.A."/>
            <person name="Van Aken S.E."/>
            <person name="Riedmuller S."/>
            <person name="Tettelin H."/>
            <person name="Gill S.R."/>
            <person name="White O."/>
            <person name="Salzberg S.L."/>
            <person name="Hoover D.L."/>
            <person name="Lindler L.E."/>
            <person name="Halling S.M."/>
            <person name="Boyle S.M."/>
            <person name="Fraser C.M."/>
        </authorList>
    </citation>
    <scope>NUCLEOTIDE SEQUENCE [LARGE SCALE GENOMIC DNA]</scope>
    <source>
        <strain>1330</strain>
    </source>
</reference>
<reference key="2">
    <citation type="journal article" date="2011" name="J. Bacteriol.">
        <title>Revised genome sequence of Brucella suis 1330.</title>
        <authorList>
            <person name="Tae H."/>
            <person name="Shallom S."/>
            <person name="Settlage R."/>
            <person name="Preston D."/>
            <person name="Adams L.G."/>
            <person name="Garner H.R."/>
        </authorList>
    </citation>
    <scope>NUCLEOTIDE SEQUENCE [LARGE SCALE GENOMIC DNA]</scope>
    <source>
        <strain>1330</strain>
    </source>
</reference>
<keyword id="KW-0963">Cytoplasm</keyword>
<keyword id="KW-0227">DNA damage</keyword>
<keyword id="KW-0233">DNA recombination</keyword>
<keyword id="KW-0234">DNA repair</keyword>
<keyword id="KW-0238">DNA-binding</keyword>
<comment type="function">
    <text evidence="1">The RuvA-RuvB-RuvC complex processes Holliday junction (HJ) DNA during genetic recombination and DNA repair, while the RuvA-RuvB complex plays an important role in the rescue of blocked DNA replication forks via replication fork reversal (RFR). RuvA specifically binds to HJ cruciform DNA, conferring on it an open structure. The RuvB hexamer acts as an ATP-dependent pump, pulling dsDNA into and through the RuvAB complex. HJ branch migration allows RuvC to scan DNA until it finds its consensus sequence, where it cleaves and resolves the cruciform DNA.</text>
</comment>
<comment type="subunit">
    <text evidence="1">Homotetramer. Forms an RuvA(8)-RuvB(12)-Holliday junction (HJ) complex. HJ DNA is sandwiched between 2 RuvA tetramers; dsDNA enters through RuvA and exits via RuvB. An RuvB hexamer assembles on each DNA strand where it exits the tetramer. Each RuvB hexamer is contacted by two RuvA subunits (via domain III) on 2 adjacent RuvB subunits; this complex drives branch migration. In the full resolvosome a probable DNA-RuvA(4)-RuvB(12)-RuvC(2) complex forms which resolves the HJ.</text>
</comment>
<comment type="subcellular location">
    <subcellularLocation>
        <location evidence="1">Cytoplasm</location>
    </subcellularLocation>
</comment>
<comment type="domain">
    <text evidence="1">Has three domains with a flexible linker between the domains II and III and assumes an 'L' shape. Domain III is highly mobile and contacts RuvB.</text>
</comment>
<comment type="similarity">
    <text evidence="1">Belongs to the RuvA family.</text>
</comment>
<gene>
    <name evidence="1" type="primary">ruvA</name>
    <name type="ordered locus">BR1703</name>
    <name type="ordered locus">BS1330_I1697</name>
</gene>
<accession>P66743</accession>
<accession>G0K6W5</accession>
<accession>Q8YIV6</accession>
<sequence>MIGKLKGVIDEIAEDHAVIDVHGVGYVAFCSARTLGNLGGAGEAAILFIETYVREDMIRLYGFATQLEREWFRLLQNVQGVGAKVALAVLGTLSPSELANAIALRDIAMVSRAPGVGKKVAERIVTELKNKAPAFAGEASGTIGLKQELGAGAAPAPVADAVSALSNLGYSRDQAANAVAAALKETGEGADSAKLIRLGLKELSQ</sequence>
<protein>
    <recommendedName>
        <fullName evidence="1">Holliday junction branch migration complex subunit RuvA</fullName>
    </recommendedName>
</protein>
<name>RUVA_BRUSU</name>
<dbReference type="EMBL" id="AE014291">
    <property type="protein sequence ID" value="AAN30603.1"/>
    <property type="molecule type" value="Genomic_DNA"/>
</dbReference>
<dbReference type="EMBL" id="CP002997">
    <property type="protein sequence ID" value="AEM19020.1"/>
    <property type="molecule type" value="Genomic_DNA"/>
</dbReference>
<dbReference type="RefSeq" id="WP_002964792.1">
    <property type="nucleotide sequence ID" value="NZ_KN046804.1"/>
</dbReference>
<dbReference type="SMR" id="P66743"/>
<dbReference type="GeneID" id="97533143"/>
<dbReference type="KEGG" id="bms:BR1703"/>
<dbReference type="KEGG" id="bsi:BS1330_I1697"/>
<dbReference type="PATRIC" id="fig|204722.21.peg.2395"/>
<dbReference type="HOGENOM" id="CLU_087936_3_0_5"/>
<dbReference type="PhylomeDB" id="P66743"/>
<dbReference type="Proteomes" id="UP000007104">
    <property type="component" value="Chromosome I"/>
</dbReference>
<dbReference type="GO" id="GO:0005737">
    <property type="term" value="C:cytoplasm"/>
    <property type="evidence" value="ECO:0007669"/>
    <property type="project" value="UniProtKB-SubCell"/>
</dbReference>
<dbReference type="GO" id="GO:0009379">
    <property type="term" value="C:Holliday junction helicase complex"/>
    <property type="evidence" value="ECO:0007669"/>
    <property type="project" value="InterPro"/>
</dbReference>
<dbReference type="GO" id="GO:0048476">
    <property type="term" value="C:Holliday junction resolvase complex"/>
    <property type="evidence" value="ECO:0007669"/>
    <property type="project" value="UniProtKB-UniRule"/>
</dbReference>
<dbReference type="GO" id="GO:0005524">
    <property type="term" value="F:ATP binding"/>
    <property type="evidence" value="ECO:0007669"/>
    <property type="project" value="InterPro"/>
</dbReference>
<dbReference type="GO" id="GO:0000400">
    <property type="term" value="F:four-way junction DNA binding"/>
    <property type="evidence" value="ECO:0007669"/>
    <property type="project" value="UniProtKB-UniRule"/>
</dbReference>
<dbReference type="GO" id="GO:0009378">
    <property type="term" value="F:four-way junction helicase activity"/>
    <property type="evidence" value="ECO:0007669"/>
    <property type="project" value="InterPro"/>
</dbReference>
<dbReference type="GO" id="GO:0006310">
    <property type="term" value="P:DNA recombination"/>
    <property type="evidence" value="ECO:0007669"/>
    <property type="project" value="UniProtKB-UniRule"/>
</dbReference>
<dbReference type="GO" id="GO:0006281">
    <property type="term" value="P:DNA repair"/>
    <property type="evidence" value="ECO:0007669"/>
    <property type="project" value="UniProtKB-UniRule"/>
</dbReference>
<dbReference type="Gene3D" id="1.10.150.20">
    <property type="entry name" value="5' to 3' exonuclease, C-terminal subdomain"/>
    <property type="match status" value="1"/>
</dbReference>
<dbReference type="Gene3D" id="1.10.8.10">
    <property type="entry name" value="DNA helicase RuvA subunit, C-terminal domain"/>
    <property type="match status" value="1"/>
</dbReference>
<dbReference type="Gene3D" id="2.40.50.140">
    <property type="entry name" value="Nucleic acid-binding proteins"/>
    <property type="match status" value="1"/>
</dbReference>
<dbReference type="HAMAP" id="MF_00031">
    <property type="entry name" value="DNA_HJ_migration_RuvA"/>
    <property type="match status" value="1"/>
</dbReference>
<dbReference type="InterPro" id="IPR013849">
    <property type="entry name" value="DNA_helicase_Holl-junc_RuvA_I"/>
</dbReference>
<dbReference type="InterPro" id="IPR003583">
    <property type="entry name" value="Hlx-hairpin-Hlx_DNA-bd_motif"/>
</dbReference>
<dbReference type="InterPro" id="IPR012340">
    <property type="entry name" value="NA-bd_OB-fold"/>
</dbReference>
<dbReference type="InterPro" id="IPR000085">
    <property type="entry name" value="RuvA"/>
</dbReference>
<dbReference type="InterPro" id="IPR010994">
    <property type="entry name" value="RuvA_2-like"/>
</dbReference>
<dbReference type="InterPro" id="IPR011114">
    <property type="entry name" value="RuvA_C"/>
</dbReference>
<dbReference type="InterPro" id="IPR036267">
    <property type="entry name" value="RuvA_C_sf"/>
</dbReference>
<dbReference type="NCBIfam" id="TIGR00084">
    <property type="entry name" value="ruvA"/>
    <property type="match status" value="1"/>
</dbReference>
<dbReference type="Pfam" id="PF14520">
    <property type="entry name" value="HHH_5"/>
    <property type="match status" value="1"/>
</dbReference>
<dbReference type="Pfam" id="PF07499">
    <property type="entry name" value="RuvA_C"/>
    <property type="match status" value="1"/>
</dbReference>
<dbReference type="Pfam" id="PF01330">
    <property type="entry name" value="RuvA_N"/>
    <property type="match status" value="1"/>
</dbReference>
<dbReference type="SMART" id="SM00278">
    <property type="entry name" value="HhH1"/>
    <property type="match status" value="2"/>
</dbReference>
<dbReference type="SUPFAM" id="SSF46929">
    <property type="entry name" value="DNA helicase RuvA subunit, C-terminal domain"/>
    <property type="match status" value="1"/>
</dbReference>
<dbReference type="SUPFAM" id="SSF50249">
    <property type="entry name" value="Nucleic acid-binding proteins"/>
    <property type="match status" value="1"/>
</dbReference>
<dbReference type="SUPFAM" id="SSF47781">
    <property type="entry name" value="RuvA domain 2-like"/>
    <property type="match status" value="1"/>
</dbReference>
<proteinExistence type="inferred from homology"/>
<feature type="chain" id="PRO_0000094611" description="Holliday junction branch migration complex subunit RuvA">
    <location>
        <begin position="1"/>
        <end position="205"/>
    </location>
</feature>
<feature type="region of interest" description="Domain I" evidence="1">
    <location>
        <begin position="1"/>
        <end position="64"/>
    </location>
</feature>
<feature type="region of interest" description="Domain II" evidence="1">
    <location>
        <begin position="65"/>
        <end position="143"/>
    </location>
</feature>
<feature type="region of interest" description="Flexible linker" evidence="1">
    <location>
        <begin position="144"/>
        <end position="152"/>
    </location>
</feature>
<feature type="region of interest" description="Domain III" evidence="1">
    <location>
        <begin position="153"/>
        <end position="205"/>
    </location>
</feature>
<evidence type="ECO:0000255" key="1">
    <source>
        <dbReference type="HAMAP-Rule" id="MF_00031"/>
    </source>
</evidence>